<comment type="function">
    <text evidence="1">Involved in DNA repair and RecF pathway recombination.</text>
</comment>
<comment type="similarity">
    <text evidence="1">Belongs to the RecO family.</text>
</comment>
<evidence type="ECO:0000255" key="1">
    <source>
        <dbReference type="HAMAP-Rule" id="MF_00201"/>
    </source>
</evidence>
<name>RECO_GEOMG</name>
<dbReference type="EMBL" id="CP000148">
    <property type="protein sequence ID" value="ABB33161.1"/>
    <property type="molecule type" value="Genomic_DNA"/>
</dbReference>
<dbReference type="RefSeq" id="WP_004512879.1">
    <property type="nucleotide sequence ID" value="NC_007517.1"/>
</dbReference>
<dbReference type="SMR" id="Q39RG3"/>
<dbReference type="STRING" id="269799.Gmet_2943"/>
<dbReference type="KEGG" id="gme:Gmet_2943"/>
<dbReference type="eggNOG" id="COG1381">
    <property type="taxonomic scope" value="Bacteria"/>
</dbReference>
<dbReference type="HOGENOM" id="CLU_066632_2_0_7"/>
<dbReference type="Proteomes" id="UP000007073">
    <property type="component" value="Chromosome"/>
</dbReference>
<dbReference type="GO" id="GO:0043590">
    <property type="term" value="C:bacterial nucleoid"/>
    <property type="evidence" value="ECO:0007669"/>
    <property type="project" value="TreeGrafter"/>
</dbReference>
<dbReference type="GO" id="GO:0006310">
    <property type="term" value="P:DNA recombination"/>
    <property type="evidence" value="ECO:0007669"/>
    <property type="project" value="UniProtKB-UniRule"/>
</dbReference>
<dbReference type="GO" id="GO:0006302">
    <property type="term" value="P:double-strand break repair"/>
    <property type="evidence" value="ECO:0007669"/>
    <property type="project" value="TreeGrafter"/>
</dbReference>
<dbReference type="Gene3D" id="2.40.50.140">
    <property type="entry name" value="Nucleic acid-binding proteins"/>
    <property type="match status" value="1"/>
</dbReference>
<dbReference type="Gene3D" id="1.20.1440.120">
    <property type="entry name" value="Recombination protein O, C-terminal domain"/>
    <property type="match status" value="1"/>
</dbReference>
<dbReference type="HAMAP" id="MF_00201">
    <property type="entry name" value="RecO"/>
    <property type="match status" value="1"/>
</dbReference>
<dbReference type="InterPro" id="IPR037278">
    <property type="entry name" value="ARFGAP/RecO"/>
</dbReference>
<dbReference type="InterPro" id="IPR022572">
    <property type="entry name" value="DNA_rep/recomb_RecO_N"/>
</dbReference>
<dbReference type="InterPro" id="IPR012340">
    <property type="entry name" value="NA-bd_OB-fold"/>
</dbReference>
<dbReference type="InterPro" id="IPR003717">
    <property type="entry name" value="RecO"/>
</dbReference>
<dbReference type="InterPro" id="IPR042242">
    <property type="entry name" value="RecO_C"/>
</dbReference>
<dbReference type="NCBIfam" id="TIGR00613">
    <property type="entry name" value="reco"/>
    <property type="match status" value="1"/>
</dbReference>
<dbReference type="PANTHER" id="PTHR33991">
    <property type="entry name" value="DNA REPAIR PROTEIN RECO"/>
    <property type="match status" value="1"/>
</dbReference>
<dbReference type="PANTHER" id="PTHR33991:SF1">
    <property type="entry name" value="DNA REPAIR PROTEIN RECO"/>
    <property type="match status" value="1"/>
</dbReference>
<dbReference type="Pfam" id="PF02565">
    <property type="entry name" value="RecO_C"/>
    <property type="match status" value="1"/>
</dbReference>
<dbReference type="Pfam" id="PF11967">
    <property type="entry name" value="RecO_N"/>
    <property type="match status" value="1"/>
</dbReference>
<dbReference type="SUPFAM" id="SSF57863">
    <property type="entry name" value="ArfGap/RecO-like zinc finger"/>
    <property type="match status" value="1"/>
</dbReference>
<dbReference type="SUPFAM" id="SSF50249">
    <property type="entry name" value="Nucleic acid-binding proteins"/>
    <property type="match status" value="1"/>
</dbReference>
<organism>
    <name type="scientific">Geobacter metallireducens (strain ATCC 53774 / DSM 7210 / GS-15)</name>
    <dbReference type="NCBI Taxonomy" id="269799"/>
    <lineage>
        <taxon>Bacteria</taxon>
        <taxon>Pseudomonadati</taxon>
        <taxon>Thermodesulfobacteriota</taxon>
        <taxon>Desulfuromonadia</taxon>
        <taxon>Geobacterales</taxon>
        <taxon>Geobacteraceae</taxon>
        <taxon>Geobacter</taxon>
    </lineage>
</organism>
<protein>
    <recommendedName>
        <fullName evidence="1">DNA repair protein RecO</fullName>
    </recommendedName>
    <alternativeName>
        <fullName evidence="1">Recombination protein O</fullName>
    </alternativeName>
</protein>
<reference key="1">
    <citation type="journal article" date="2009" name="BMC Microbiol.">
        <title>The genome sequence of Geobacter metallireducens: features of metabolism, physiology and regulation common and dissimilar to Geobacter sulfurreducens.</title>
        <authorList>
            <person name="Aklujkar M."/>
            <person name="Krushkal J."/>
            <person name="DiBartolo G."/>
            <person name="Lapidus A."/>
            <person name="Land M.L."/>
            <person name="Lovley D.R."/>
        </authorList>
    </citation>
    <scope>NUCLEOTIDE SEQUENCE [LARGE SCALE GENOMIC DNA]</scope>
    <source>
        <strain>ATCC 53774 / DSM 7210 / GS-15</strain>
    </source>
</reference>
<sequence length="244" mass="26429">MESTRTEAIVLAAMDYRESDRIVTLFTLQYGKVRGVAKGAKRSARRFGPALEPFARIGVELVVREGLSSLRGADIVTLYPGIRRDLRAIGLAGYAVELVDRYLPDGAPSPRLFRLLSSYLERLDQGEPLPSDRRFFEANFLNILGYRISLDHCASCGVELPATAERRTGASGMILCANCGRYGASVGPEAAALLGRCIATGRFGAVLFSPQSLREAGTLLDGAIAAHLTRPLNSLAFLKQIEPD</sequence>
<feature type="chain" id="PRO_0000264818" description="DNA repair protein RecO">
    <location>
        <begin position="1"/>
        <end position="244"/>
    </location>
</feature>
<proteinExistence type="inferred from homology"/>
<accession>Q39RG3</accession>
<gene>
    <name evidence="1" type="primary">recO</name>
    <name type="ordered locus">Gmet_2943</name>
</gene>
<keyword id="KW-0227">DNA damage</keyword>
<keyword id="KW-0233">DNA recombination</keyword>
<keyword id="KW-0234">DNA repair</keyword>
<keyword id="KW-1185">Reference proteome</keyword>